<protein>
    <recommendedName>
        <fullName evidence="1">Fluoride-specific ion channel FluC</fullName>
    </recommendedName>
</protein>
<feature type="chain" id="PRO_0000110118" description="Fluoride-specific ion channel FluC">
    <location>
        <begin position="1"/>
        <end position="134"/>
    </location>
</feature>
<feature type="transmembrane region" description="Helical" evidence="1">
    <location>
        <begin position="7"/>
        <end position="27"/>
    </location>
</feature>
<feature type="transmembrane region" description="Helical" evidence="1">
    <location>
        <begin position="38"/>
        <end position="58"/>
    </location>
</feature>
<feature type="transmembrane region" description="Helical" evidence="1">
    <location>
        <begin position="69"/>
        <end position="89"/>
    </location>
</feature>
<feature type="transmembrane region" description="Helical" evidence="1">
    <location>
        <begin position="110"/>
        <end position="130"/>
    </location>
</feature>
<feature type="binding site" evidence="1">
    <location>
        <position position="77"/>
    </location>
    <ligand>
        <name>Na(+)</name>
        <dbReference type="ChEBI" id="CHEBI:29101"/>
        <note>structural</note>
    </ligand>
</feature>
<feature type="binding site" evidence="1">
    <location>
        <position position="80"/>
    </location>
    <ligand>
        <name>Na(+)</name>
        <dbReference type="ChEBI" id="CHEBI:29101"/>
        <note>structural</note>
    </ligand>
</feature>
<comment type="function">
    <text evidence="1">Fluoride-specific ion channel. Important for reducing fluoride concentration in the cell, thus reducing its toxicity.</text>
</comment>
<comment type="catalytic activity">
    <reaction evidence="1">
        <text>fluoride(in) = fluoride(out)</text>
        <dbReference type="Rhea" id="RHEA:76159"/>
        <dbReference type="ChEBI" id="CHEBI:17051"/>
    </reaction>
    <physiologicalReaction direction="left-to-right" evidence="1">
        <dbReference type="Rhea" id="RHEA:76160"/>
    </physiologicalReaction>
</comment>
<comment type="activity regulation">
    <text evidence="1">Na(+) is not transported, but it plays an essential structural role and its presence is essential for fluoride channel function.</text>
</comment>
<comment type="subcellular location">
    <subcellularLocation>
        <location evidence="1">Cell inner membrane</location>
        <topology evidence="1">Multi-pass membrane protein</topology>
    </subcellularLocation>
</comment>
<comment type="similarity">
    <text evidence="1">Belongs to the fluoride channel Fluc/FEX (TC 1.A.43) family.</text>
</comment>
<accession>Q5X7N1</accession>
<gene>
    <name evidence="1" type="primary">fluC</name>
    <name evidence="1" type="synonym">crcB</name>
    <name type="ordered locus">lpp0574</name>
</gene>
<proteinExistence type="inferred from homology"/>
<sequence length="134" mass="14594">MVVAPYLAVAIGGSLGAMSRYLVTIMAQNAWGIKFPYGTLLVNTLGSFLAGFFLIVLVGRFSAEESFRLFLFTGFLGAFTTFSSFAAESLFMFEQGYWFKLITNILVNNVGSLSMVFIGTLVAKYVLLGHQGSN</sequence>
<keyword id="KW-0997">Cell inner membrane</keyword>
<keyword id="KW-1003">Cell membrane</keyword>
<keyword id="KW-0407">Ion channel</keyword>
<keyword id="KW-0406">Ion transport</keyword>
<keyword id="KW-0472">Membrane</keyword>
<keyword id="KW-0479">Metal-binding</keyword>
<keyword id="KW-0915">Sodium</keyword>
<keyword id="KW-0812">Transmembrane</keyword>
<keyword id="KW-1133">Transmembrane helix</keyword>
<keyword id="KW-0813">Transport</keyword>
<reference key="1">
    <citation type="journal article" date="2004" name="Nat. Genet.">
        <title>Evidence in the Legionella pneumophila genome for exploitation of host cell functions and high genome plasticity.</title>
        <authorList>
            <person name="Cazalet C."/>
            <person name="Rusniok C."/>
            <person name="Brueggemann H."/>
            <person name="Zidane N."/>
            <person name="Magnier A."/>
            <person name="Ma L."/>
            <person name="Tichit M."/>
            <person name="Jarraud S."/>
            <person name="Bouchier C."/>
            <person name="Vandenesch F."/>
            <person name="Kunst F."/>
            <person name="Etienne J."/>
            <person name="Glaser P."/>
            <person name="Buchrieser C."/>
        </authorList>
    </citation>
    <scope>NUCLEOTIDE SEQUENCE [LARGE SCALE GENOMIC DNA]</scope>
    <source>
        <strain>Paris</strain>
    </source>
</reference>
<organism>
    <name type="scientific">Legionella pneumophila (strain Paris)</name>
    <dbReference type="NCBI Taxonomy" id="297246"/>
    <lineage>
        <taxon>Bacteria</taxon>
        <taxon>Pseudomonadati</taxon>
        <taxon>Pseudomonadota</taxon>
        <taxon>Gammaproteobacteria</taxon>
        <taxon>Legionellales</taxon>
        <taxon>Legionellaceae</taxon>
        <taxon>Legionella</taxon>
    </lineage>
</organism>
<evidence type="ECO:0000255" key="1">
    <source>
        <dbReference type="HAMAP-Rule" id="MF_00454"/>
    </source>
</evidence>
<dbReference type="EMBL" id="CR628336">
    <property type="protein sequence ID" value="CAH11722.1"/>
    <property type="molecule type" value="Genomic_DNA"/>
</dbReference>
<dbReference type="RefSeq" id="WP_011213139.1">
    <property type="nucleotide sequence ID" value="NC_006368.1"/>
</dbReference>
<dbReference type="SMR" id="Q5X7N1"/>
<dbReference type="KEGG" id="lpp:lpp0574"/>
<dbReference type="LegioList" id="lpp0574"/>
<dbReference type="HOGENOM" id="CLU_114342_2_3_6"/>
<dbReference type="GO" id="GO:0005886">
    <property type="term" value="C:plasma membrane"/>
    <property type="evidence" value="ECO:0007669"/>
    <property type="project" value="UniProtKB-SubCell"/>
</dbReference>
<dbReference type="GO" id="GO:0062054">
    <property type="term" value="F:fluoride channel activity"/>
    <property type="evidence" value="ECO:0007669"/>
    <property type="project" value="UniProtKB-UniRule"/>
</dbReference>
<dbReference type="GO" id="GO:0046872">
    <property type="term" value="F:metal ion binding"/>
    <property type="evidence" value="ECO:0007669"/>
    <property type="project" value="UniProtKB-KW"/>
</dbReference>
<dbReference type="GO" id="GO:0140114">
    <property type="term" value="P:cellular detoxification of fluoride"/>
    <property type="evidence" value="ECO:0007669"/>
    <property type="project" value="UniProtKB-UniRule"/>
</dbReference>
<dbReference type="HAMAP" id="MF_00454">
    <property type="entry name" value="FluC"/>
    <property type="match status" value="1"/>
</dbReference>
<dbReference type="InterPro" id="IPR003691">
    <property type="entry name" value="FluC"/>
</dbReference>
<dbReference type="NCBIfam" id="TIGR00494">
    <property type="entry name" value="crcB"/>
    <property type="match status" value="1"/>
</dbReference>
<dbReference type="PANTHER" id="PTHR28259">
    <property type="entry name" value="FLUORIDE EXPORT PROTEIN 1-RELATED"/>
    <property type="match status" value="1"/>
</dbReference>
<dbReference type="PANTHER" id="PTHR28259:SF1">
    <property type="entry name" value="FLUORIDE EXPORT PROTEIN 1-RELATED"/>
    <property type="match status" value="1"/>
</dbReference>
<dbReference type="Pfam" id="PF02537">
    <property type="entry name" value="CRCB"/>
    <property type="match status" value="1"/>
</dbReference>
<name>FLUC_LEGPA</name>